<name>VKT1_ANESU</name>
<reference key="1">
    <citation type="journal article" date="1995" name="J. Biol. Chem.">
        <title>Kalicludines and kaliseptine. Two different classes of sea anemone toxins for voltage sensitive K+ channels.</title>
        <authorList>
            <person name="Schweitz H."/>
            <person name="Bruhn T."/>
            <person name="Guillemare E."/>
            <person name="Moinier D."/>
            <person name="Lancelin J.-M."/>
            <person name="Beress L."/>
            <person name="Lazdunski M."/>
        </authorList>
    </citation>
    <scope>PROTEIN SEQUENCE</scope>
    <scope>FUNCTION</scope>
</reference>
<reference key="2">
    <citation type="journal article" date="2012" name="Toxicon">
        <title>Development of a rational nomenclature for naming peptide and protein toxins from sea anemones.</title>
        <authorList>
            <person name="Oliveira J.S."/>
            <person name="Fuentes-Silva D."/>
            <person name="King G.F."/>
        </authorList>
    </citation>
    <scope>NOMENCLATURE</scope>
</reference>
<accession>Q9TWG0</accession>
<protein>
    <recommendedName>
        <fullName evidence="4">KappaPI-actitoxin-Avd3b</fullName>
        <shortName evidence="4">KappaPI-AITX-Avd3b</shortName>
    </recommendedName>
    <alternativeName>
        <fullName evidence="5">Kunitz-type serine protease inhibitor kalicludine-1</fullName>
        <shortName evidence="5">AsKC1</shortName>
    </alternativeName>
</protein>
<evidence type="ECO:0000250" key="1">
    <source>
        <dbReference type="UniProtKB" id="P31713"/>
    </source>
</evidence>
<evidence type="ECO:0000255" key="2">
    <source>
        <dbReference type="PROSITE-ProRule" id="PRU00031"/>
    </source>
</evidence>
<evidence type="ECO:0000269" key="3">
    <source>
    </source>
</evidence>
<evidence type="ECO:0000303" key="4">
    <source>
    </source>
</evidence>
<evidence type="ECO:0000303" key="5">
    <source>
    </source>
</evidence>
<evidence type="ECO:0000305" key="6"/>
<evidence type="ECO:0000305" key="7">
    <source>
    </source>
</evidence>
<keyword id="KW-0903">Direct protein sequencing</keyword>
<keyword id="KW-1015">Disulfide bond</keyword>
<keyword id="KW-0872">Ion channel impairing toxin</keyword>
<keyword id="KW-0166">Nematocyst</keyword>
<keyword id="KW-0632">Potassium channel impairing toxin</keyword>
<keyword id="KW-0646">Protease inhibitor</keyword>
<keyword id="KW-0964">Secreted</keyword>
<keyword id="KW-0722">Serine protease inhibitor</keyword>
<keyword id="KW-0800">Toxin</keyword>
<keyword id="KW-1220">Voltage-gated potassium channel impairing toxin</keyword>
<organism>
    <name type="scientific">Anemonia sulcata</name>
    <name type="common">Mediterranean snakelocks sea anemone</name>
    <dbReference type="NCBI Taxonomy" id="6108"/>
    <lineage>
        <taxon>Eukaryota</taxon>
        <taxon>Metazoa</taxon>
        <taxon>Cnidaria</taxon>
        <taxon>Anthozoa</taxon>
        <taxon>Hexacorallia</taxon>
        <taxon>Actiniaria</taxon>
        <taxon>Actiniidae</taxon>
        <taxon>Anemonia</taxon>
    </lineage>
</organism>
<dbReference type="SMR" id="Q9TWG0"/>
<dbReference type="GO" id="GO:0005615">
    <property type="term" value="C:extracellular space"/>
    <property type="evidence" value="ECO:0007669"/>
    <property type="project" value="TreeGrafter"/>
</dbReference>
<dbReference type="GO" id="GO:0042151">
    <property type="term" value="C:nematocyst"/>
    <property type="evidence" value="ECO:0007669"/>
    <property type="project" value="UniProtKB-SubCell"/>
</dbReference>
<dbReference type="GO" id="GO:0015459">
    <property type="term" value="F:potassium channel regulator activity"/>
    <property type="evidence" value="ECO:0007669"/>
    <property type="project" value="UniProtKB-KW"/>
</dbReference>
<dbReference type="GO" id="GO:0004867">
    <property type="term" value="F:serine-type endopeptidase inhibitor activity"/>
    <property type="evidence" value="ECO:0007669"/>
    <property type="project" value="UniProtKB-KW"/>
</dbReference>
<dbReference type="GO" id="GO:0090729">
    <property type="term" value="F:toxin activity"/>
    <property type="evidence" value="ECO:0007669"/>
    <property type="project" value="UniProtKB-KW"/>
</dbReference>
<dbReference type="CDD" id="cd22633">
    <property type="entry name" value="Kunitz_actitoxin-like"/>
    <property type="match status" value="1"/>
</dbReference>
<dbReference type="FunFam" id="4.10.410.10:FF:000021">
    <property type="entry name" value="Serine protease inhibitor, putative"/>
    <property type="match status" value="1"/>
</dbReference>
<dbReference type="Gene3D" id="4.10.410.10">
    <property type="entry name" value="Pancreatic trypsin inhibitor Kunitz domain"/>
    <property type="match status" value="1"/>
</dbReference>
<dbReference type="InterPro" id="IPR002223">
    <property type="entry name" value="Kunitz_BPTI"/>
</dbReference>
<dbReference type="InterPro" id="IPR036880">
    <property type="entry name" value="Kunitz_BPTI_sf"/>
</dbReference>
<dbReference type="InterPro" id="IPR020901">
    <property type="entry name" value="Prtase_inh_Kunz-CS"/>
</dbReference>
<dbReference type="InterPro" id="IPR050098">
    <property type="entry name" value="TFPI/VKTCI-like"/>
</dbReference>
<dbReference type="PANTHER" id="PTHR10083:SF374">
    <property type="entry name" value="BPTI_KUNITZ INHIBITOR DOMAIN-CONTAINING PROTEIN"/>
    <property type="match status" value="1"/>
</dbReference>
<dbReference type="PANTHER" id="PTHR10083">
    <property type="entry name" value="KUNITZ-TYPE PROTEASE INHIBITOR-RELATED"/>
    <property type="match status" value="1"/>
</dbReference>
<dbReference type="Pfam" id="PF00014">
    <property type="entry name" value="Kunitz_BPTI"/>
    <property type="match status" value="1"/>
</dbReference>
<dbReference type="PRINTS" id="PR00759">
    <property type="entry name" value="BASICPTASE"/>
</dbReference>
<dbReference type="SMART" id="SM00131">
    <property type="entry name" value="KU"/>
    <property type="match status" value="1"/>
</dbReference>
<dbReference type="SUPFAM" id="SSF57362">
    <property type="entry name" value="BPTI-like"/>
    <property type="match status" value="1"/>
</dbReference>
<dbReference type="PROSITE" id="PS00280">
    <property type="entry name" value="BPTI_KUNITZ_1"/>
    <property type="match status" value="1"/>
</dbReference>
<dbReference type="PROSITE" id="PS50279">
    <property type="entry name" value="BPTI_KUNITZ_2"/>
    <property type="match status" value="1"/>
</dbReference>
<comment type="function">
    <text evidence="3">Dual-function toxin that inhibits both the serine protease trypsin (Kd&lt;30 nM) and voltage-gated potassium channels Kv1.2/KCNA2 (IC(50)=2800 nM).</text>
</comment>
<comment type="subcellular location">
    <subcellularLocation>
        <location evidence="7">Secreted</location>
    </subcellularLocation>
    <subcellularLocation>
        <location evidence="6">Nematocyst</location>
    </subcellularLocation>
</comment>
<comment type="similarity">
    <text evidence="6">Belongs to the venom Kunitz-type family. Sea anemone type 2 potassium channel toxin subfamily.</text>
</comment>
<comment type="caution">
    <text evidence="6">Opinions are divided on whether Anemonia viridis (Forsskal, 1775) and Anemonia sulcata (Pennant, 1777) are separate species.</text>
</comment>
<sequence length="58" mass="6691">INKDCLLPMDVGRCRASHPRYYYNSSSKRCEKFIYGGCRGNANNFHTLEECEKVCGVR</sequence>
<proteinExistence type="evidence at protein level"/>
<feature type="chain" id="PRO_0000155412" description="KappaPI-actitoxin-Avd3b" evidence="3">
    <location>
        <begin position="1"/>
        <end position="58"/>
    </location>
</feature>
<feature type="domain" description="BPTI/Kunitz inhibitor" evidence="2">
    <location>
        <begin position="5"/>
        <end position="55"/>
    </location>
</feature>
<feature type="site" description="Reactive bond for trypsin" evidence="1">
    <location>
        <begin position="15"/>
        <end position="16"/>
    </location>
</feature>
<feature type="disulfide bond" evidence="2">
    <location>
        <begin position="5"/>
        <end position="55"/>
    </location>
</feature>
<feature type="disulfide bond" evidence="2">
    <location>
        <begin position="14"/>
        <end position="38"/>
    </location>
</feature>
<feature type="disulfide bond" evidence="2">
    <location>
        <begin position="30"/>
        <end position="51"/>
    </location>
</feature>